<organism>
    <name type="scientific">Vibrio harveyi</name>
    <name type="common">Beneckea harveyi</name>
    <dbReference type="NCBI Taxonomy" id="669"/>
    <lineage>
        <taxon>Bacteria</taxon>
        <taxon>Pseudomonadati</taxon>
        <taxon>Pseudomonadota</taxon>
        <taxon>Gammaproteobacteria</taxon>
        <taxon>Vibrionales</taxon>
        <taxon>Vibrionaceae</taxon>
        <taxon>Vibrio</taxon>
    </lineage>
</organism>
<proteinExistence type="evidence at protein level"/>
<name>LUXA_VIBHA</name>
<dbReference type="EC" id="1.14.14.3" evidence="1"/>
<dbReference type="EMBL" id="M10961">
    <property type="protein sequence ID" value="AAA88685.1"/>
    <property type="molecule type" value="Genomic_DNA"/>
</dbReference>
<dbReference type="EMBL" id="X58791">
    <property type="protein sequence ID" value="CAA41597.1"/>
    <property type="molecule type" value="Genomic_DNA"/>
</dbReference>
<dbReference type="EMBL" id="V01422">
    <property type="protein sequence ID" value="CAA24692.1"/>
    <property type="molecule type" value="Genomic_DNA"/>
</dbReference>
<dbReference type="EMBL" id="V01423">
    <property type="protein sequence ID" value="CAA24693.1"/>
    <property type="molecule type" value="Genomic_DNA"/>
</dbReference>
<dbReference type="PIR" id="A22613">
    <property type="entry name" value="A22613"/>
</dbReference>
<dbReference type="RefSeq" id="WP_010991819.1">
    <property type="nucleotide sequence ID" value="NZ_CP009468.1"/>
</dbReference>
<dbReference type="PDB" id="1BRL">
    <property type="method" value="X-ray"/>
    <property type="resolution" value="2.40 A"/>
    <property type="chains" value="A/C=1-355"/>
</dbReference>
<dbReference type="PDB" id="1LUC">
    <property type="method" value="X-ray"/>
    <property type="resolution" value="1.50 A"/>
    <property type="chains" value="A=1-355"/>
</dbReference>
<dbReference type="PDB" id="3FGC">
    <property type="method" value="X-ray"/>
    <property type="resolution" value="2.30 A"/>
    <property type="chains" value="A/C=1-355"/>
</dbReference>
<dbReference type="PDBsum" id="1BRL"/>
<dbReference type="PDBsum" id="1LUC"/>
<dbReference type="PDBsum" id="3FGC"/>
<dbReference type="SMR" id="P07740"/>
<dbReference type="MINT" id="P07740"/>
<dbReference type="BindingDB" id="P07740"/>
<dbReference type="BRENDA" id="1.14.14.3">
    <property type="organism ID" value="4778"/>
</dbReference>
<dbReference type="EvolutionaryTrace" id="P07740"/>
<dbReference type="GO" id="GO:0005829">
    <property type="term" value="C:cytosol"/>
    <property type="evidence" value="ECO:0007669"/>
    <property type="project" value="TreeGrafter"/>
</dbReference>
<dbReference type="GO" id="GO:0047646">
    <property type="term" value="F:alkanal monooxygenase (FMN-linked) activity"/>
    <property type="evidence" value="ECO:0007669"/>
    <property type="project" value="UniProtKB-EC"/>
</dbReference>
<dbReference type="GO" id="GO:0008218">
    <property type="term" value="P:bioluminescence"/>
    <property type="evidence" value="ECO:0007669"/>
    <property type="project" value="UniProtKB-KW"/>
</dbReference>
<dbReference type="CDD" id="cd01096">
    <property type="entry name" value="Alkanal_monooxygenase"/>
    <property type="match status" value="1"/>
</dbReference>
<dbReference type="Gene3D" id="3.20.20.30">
    <property type="entry name" value="Luciferase-like domain"/>
    <property type="match status" value="1"/>
</dbReference>
<dbReference type="InterPro" id="IPR033924">
    <property type="entry name" value="Alkanal_monooxygenase"/>
</dbReference>
<dbReference type="InterPro" id="IPR050766">
    <property type="entry name" value="Bact_Lucif_Oxidored"/>
</dbReference>
<dbReference type="InterPro" id="IPR018235">
    <property type="entry name" value="Bacterial_luciferase_CS"/>
</dbReference>
<dbReference type="InterPro" id="IPR011251">
    <property type="entry name" value="Luciferase-like_dom"/>
</dbReference>
<dbReference type="InterPro" id="IPR036661">
    <property type="entry name" value="Luciferase-like_sf"/>
</dbReference>
<dbReference type="InterPro" id="IPR002103">
    <property type="entry name" value="Luciferase_bac/NFP"/>
</dbReference>
<dbReference type="PANTHER" id="PTHR30137:SF8">
    <property type="entry name" value="BLR5498 PROTEIN"/>
    <property type="match status" value="1"/>
</dbReference>
<dbReference type="PANTHER" id="PTHR30137">
    <property type="entry name" value="LUCIFERASE-LIKE MONOOXYGENASE"/>
    <property type="match status" value="1"/>
</dbReference>
<dbReference type="Pfam" id="PF00296">
    <property type="entry name" value="Bac_luciferase"/>
    <property type="match status" value="1"/>
</dbReference>
<dbReference type="PRINTS" id="PR00089">
    <property type="entry name" value="LUCIFERASE"/>
</dbReference>
<dbReference type="SUPFAM" id="SSF51679">
    <property type="entry name" value="Bacterial luciferase-like"/>
    <property type="match status" value="1"/>
</dbReference>
<dbReference type="PROSITE" id="PS00494">
    <property type="entry name" value="BACTERIAL_LUCIFERASE"/>
    <property type="match status" value="1"/>
</dbReference>
<feature type="chain" id="PRO_0000220172" description="Alkanal monooxygenase alpha chain">
    <location>
        <begin position="1"/>
        <end position="355"/>
    </location>
</feature>
<feature type="sequence conflict" description="In Ref. 1; AA sequence." evidence="4" ref="1">
    <original>Q</original>
    <variation>E</variation>
    <location>
        <position position="17"/>
    </location>
</feature>
<feature type="sequence conflict" description="In Ref. 2; CAA41597." evidence="4" ref="2">
    <original>T</original>
    <variation>K</variation>
    <location>
        <position position="68"/>
    </location>
</feature>
<feature type="sequence conflict" description="In Ref. 1; AA sequence." evidence="4" ref="1">
    <original>P</original>
    <variation>A</variation>
    <location>
        <position position="169"/>
    </location>
</feature>
<feature type="sequence conflict" description="In Ref. 1; AA sequence." evidence="4" ref="1">
    <original>A</original>
    <variation>P</variation>
    <location>
        <position position="174"/>
    </location>
</feature>
<feature type="sequence conflict" description="In Ref. 2; CAA41597." evidence="4" ref="2">
    <original>QL</original>
    <variation>HV</variation>
    <location>
        <begin position="204"/>
        <end position="205"/>
    </location>
</feature>
<feature type="sequence conflict" description="In Ref. 2; CAA41597." evidence="4" ref="2">
    <original>R</original>
    <variation>K</variation>
    <location>
        <position position="238"/>
    </location>
</feature>
<feature type="sequence conflict" description="In Ref. 2; CAA41597." evidence="4" ref="2">
    <original>D</original>
    <variation>N</variation>
    <location>
        <position position="321"/>
    </location>
</feature>
<feature type="strand" evidence="5">
    <location>
        <begin position="2"/>
        <end position="7"/>
    </location>
</feature>
<feature type="helix" evidence="5">
    <location>
        <begin position="17"/>
        <end position="30"/>
    </location>
</feature>
<feature type="helix" evidence="5">
    <location>
        <begin position="32"/>
        <end position="34"/>
    </location>
</feature>
<feature type="strand" evidence="5">
    <location>
        <begin position="37"/>
        <end position="41"/>
    </location>
</feature>
<feature type="helix" evidence="5">
    <location>
        <begin position="55"/>
        <end position="65"/>
    </location>
</feature>
<feature type="strand" evidence="5">
    <location>
        <begin position="70"/>
        <end position="77"/>
    </location>
</feature>
<feature type="helix" evidence="5">
    <location>
        <begin position="78"/>
        <end position="80"/>
    </location>
</feature>
<feature type="helix" evidence="5">
    <location>
        <begin position="83"/>
        <end position="97"/>
    </location>
</feature>
<feature type="strand" evidence="5">
    <location>
        <begin position="101"/>
        <end position="106"/>
    </location>
</feature>
<feature type="helix" evidence="5">
    <location>
        <begin position="111"/>
        <end position="117"/>
    </location>
</feature>
<feature type="helix" evidence="5">
    <location>
        <begin position="121"/>
        <end position="123"/>
    </location>
</feature>
<feature type="helix" evidence="5">
    <location>
        <begin position="124"/>
        <end position="141"/>
    </location>
</feature>
<feature type="strand" evidence="5">
    <location>
        <begin position="142"/>
        <end position="150"/>
    </location>
</feature>
<feature type="strand" evidence="5">
    <location>
        <begin position="152"/>
        <end position="157"/>
    </location>
</feature>
<feature type="strand" evidence="5">
    <location>
        <begin position="170"/>
        <end position="172"/>
    </location>
</feature>
<feature type="helix" evidence="5">
    <location>
        <begin position="177"/>
        <end position="185"/>
    </location>
</feature>
<feature type="strand" evidence="5">
    <location>
        <begin position="190"/>
        <end position="192"/>
    </location>
</feature>
<feature type="strand" evidence="5">
    <location>
        <begin position="194"/>
        <end position="196"/>
    </location>
</feature>
<feature type="helix" evidence="5">
    <location>
        <begin position="198"/>
        <end position="214"/>
    </location>
</feature>
<feature type="helix" evidence="5">
    <location>
        <begin position="219"/>
        <end position="221"/>
    </location>
</feature>
<feature type="strand" evidence="5">
    <location>
        <begin position="225"/>
        <end position="229"/>
    </location>
</feature>
<feature type="helix" evidence="5">
    <location>
        <begin position="236"/>
        <end position="259"/>
    </location>
</feature>
<feature type="turn" evidence="6">
    <location>
        <begin position="260"/>
        <end position="263"/>
    </location>
</feature>
<feature type="helix" evidence="6">
    <location>
        <begin position="274"/>
        <end position="276"/>
    </location>
</feature>
<feature type="helix" evidence="5">
    <location>
        <begin position="294"/>
        <end position="298"/>
    </location>
</feature>
<feature type="strand" evidence="5">
    <location>
        <begin position="299"/>
        <end position="303"/>
    </location>
</feature>
<feature type="helix" evidence="5">
    <location>
        <begin position="304"/>
        <end position="318"/>
    </location>
</feature>
<feature type="strand" evidence="5">
    <location>
        <begin position="322"/>
        <end position="326"/>
    </location>
</feature>
<feature type="helix" evidence="5">
    <location>
        <begin position="328"/>
        <end position="330"/>
    </location>
</feature>
<feature type="helix" evidence="5">
    <location>
        <begin position="333"/>
        <end position="346"/>
    </location>
</feature>
<feature type="helix" evidence="5">
    <location>
        <begin position="348"/>
        <end position="350"/>
    </location>
</feature>
<evidence type="ECO:0000250" key="1">
    <source>
        <dbReference type="UniProtKB" id="P19839"/>
    </source>
</evidence>
<evidence type="ECO:0000269" key="2">
    <source>
    </source>
</evidence>
<evidence type="ECO:0000269" key="3">
    <source>
    </source>
</evidence>
<evidence type="ECO:0000305" key="4"/>
<evidence type="ECO:0007829" key="5">
    <source>
        <dbReference type="PDB" id="1LUC"/>
    </source>
</evidence>
<evidence type="ECO:0007829" key="6">
    <source>
        <dbReference type="PDB" id="3FGC"/>
    </source>
</evidence>
<accession>P07740</accession>
<accession>Q56698</accession>
<accession>Q6LBZ4</accession>
<accession>Q6LBZ5</accession>
<protein>
    <recommendedName>
        <fullName>Alkanal monooxygenase alpha chain</fullName>
        <ecNumber evidence="1">1.14.14.3</ecNumber>
    </recommendedName>
    <alternativeName>
        <fullName>Bacterial luciferase alpha chain</fullName>
    </alternativeName>
</protein>
<comment type="function">
    <text evidence="1">Light-emitting reaction in luminous bacteria.</text>
</comment>
<comment type="catalytic activity">
    <reaction evidence="1">
        <text>a long-chain fatty aldehyde + FMNH2 + O2 = a long-chain fatty acid + hnu + FMN + H2O + 2 H(+)</text>
        <dbReference type="Rhea" id="RHEA:17181"/>
        <dbReference type="ChEBI" id="CHEBI:15377"/>
        <dbReference type="ChEBI" id="CHEBI:15378"/>
        <dbReference type="ChEBI" id="CHEBI:15379"/>
        <dbReference type="ChEBI" id="CHEBI:17176"/>
        <dbReference type="ChEBI" id="CHEBI:30212"/>
        <dbReference type="ChEBI" id="CHEBI:57560"/>
        <dbReference type="ChEBI" id="CHEBI:57618"/>
        <dbReference type="ChEBI" id="CHEBI:58210"/>
        <dbReference type="EC" id="1.14.14.3"/>
    </reaction>
</comment>
<comment type="subunit">
    <text evidence="2 3">Heterodimer of an alpha and a beta chain.</text>
</comment>
<comment type="miscellaneous">
    <text>The synthesis of this protein is regulated by a complex control mechanism that has been termed autoinduction. In fully induced cells luciferase comprises up to 5% of the soluble protein.</text>
</comment>
<comment type="similarity">
    <text evidence="4">Belongs to the bacterial luciferase oxidoreductase family.</text>
</comment>
<reference key="1">
    <citation type="journal article" date="1985" name="J. Biol. Chem.">
        <title>Nucleotide sequence of the luxA gene of Vibrio harveyi and the complete amino acid sequence of the alpha subunit of bacterial luciferase.</title>
        <authorList>
            <person name="Cohn D.H."/>
            <person name="Mileham A.J."/>
            <person name="Simon M.I."/>
            <person name="Nealson K.H."/>
            <person name="Rausch S.K."/>
            <person name="Bonam D."/>
            <person name="Baldwin T.O."/>
        </authorList>
    </citation>
    <scope>NUCLEOTIDE SEQUENCE [GENOMIC DNA]</scope>
    <scope>PARTIAL PROTEIN SEQUENCE</scope>
</reference>
<reference key="2">
    <citation type="journal article" date="1991" name="Mol. Gen. Genet.">
        <title>The beta subunit polypeptide of Vibrio harveyi luciferase determines light emission at 42 degrees C.</title>
        <authorList>
            <person name="Escher A."/>
            <person name="O'Kane D.J."/>
            <person name="Szalay A.A."/>
        </authorList>
    </citation>
    <scope>NUCLEOTIDE SEQUENCE [GENOMIC DNA]</scope>
    <source>
        <strain>CTP5</strain>
    </source>
</reference>
<reference key="3">
    <citation type="journal article" date="1983" name="Proc. Natl. Acad. Sci. U.S.A.">
        <title>Cloning of the Vibrio harveyi luciferase genes: use of a synthetic oligonucleotide probe.</title>
        <authorList>
            <person name="Cohn D.H."/>
            <person name="Ogden R.C."/>
            <person name="Abelson J.N."/>
            <person name="Baldwin T.O."/>
            <person name="Nealson K.H."/>
            <person name="Simon M.I."/>
            <person name="Mileham A.J."/>
        </authorList>
    </citation>
    <scope>NUCLEOTIDE SEQUENCE [GENOMIC DNA] OF 1-28 AND 74-133</scope>
    <source>
        <strain>ATCC 33843 / NCIMB 1871 / 392 / MAV</strain>
    </source>
</reference>
<reference key="4">
    <citation type="journal article" date="1995" name="Biochemistry">
        <title>Three-dimensional structure of bacterial luciferase from Vibrio harveyi at 2.4-A resolution.</title>
        <authorList>
            <person name="Fisher A.J."/>
            <person name="Raushel F.M."/>
            <person name="Baldwin T.O."/>
            <person name="Rayment I."/>
        </authorList>
    </citation>
    <scope>X-RAY CRYSTALLOGRAPHY (2.4 ANGSTROMS)</scope>
    <scope>SUBUNIT</scope>
</reference>
<reference key="5">
    <citation type="journal article" date="1996" name="J. Biol. Chem.">
        <title>The 1.5-A resolution crystal structure of bacterial luciferase in low salt conditions.</title>
        <authorList>
            <person name="Fisher A.J."/>
            <person name="Thompson T.B."/>
            <person name="Thoden J.B."/>
            <person name="Baldwin T.O."/>
            <person name="Rayment I."/>
        </authorList>
    </citation>
    <scope>X-RAY CRYSTALLOGRAPHY (1.5 ANGSTROMS)</scope>
    <scope>SUBUNIT</scope>
</reference>
<gene>
    <name type="primary">luxA</name>
</gene>
<sequence>MKFGNFLLTYQPPELSQTEVMKRLVNLGKASEGCGFDTVWLLEHHFTEFGLLGNPYVAAAHLLGATETLNVGTAAIVLPTAHPVRQAEDVNLLDQMSKGRFRFGICRGLYDKDFRVFGTDMDNSRALMDCWYDLMKEGFNEGYIAADNEHIKFPKIQLNPSAYTQGGAPVYVVAESASTTEWAAERGLPMILSWIINTHEKKAQLDLYNEVATEHGYDVTKIDHCLSYITSVDHDSNRAKDICRNFLGHWYDSYVNATKIFDDSDQTKGYDFNKGQWRDFVLKGHKDTNRRIDYSYEINPVGTPEECIAIIQQDIDATGIDNICCGFEANGSEEEIIASMKLFQSDVMPYLKEKQ</sequence>
<keyword id="KW-0002">3D-structure</keyword>
<keyword id="KW-0903">Direct protein sequencing</keyword>
<keyword id="KW-0285">Flavoprotein</keyword>
<keyword id="KW-0288">FMN</keyword>
<keyword id="KW-0455">Luminescence</keyword>
<keyword id="KW-0503">Monooxygenase</keyword>
<keyword id="KW-0560">Oxidoreductase</keyword>
<keyword id="KW-0599">Photoprotein</keyword>